<dbReference type="GO" id="GO:0005576">
    <property type="term" value="C:extracellular region"/>
    <property type="evidence" value="ECO:0007669"/>
    <property type="project" value="UniProtKB-SubCell"/>
</dbReference>
<dbReference type="GO" id="GO:0007218">
    <property type="term" value="P:neuropeptide signaling pathway"/>
    <property type="evidence" value="ECO:0007669"/>
    <property type="project" value="UniProtKB-KW"/>
</dbReference>
<feature type="peptide" id="PRO_0000043461" description="Carcinustatin-4">
    <location>
        <begin position="1"/>
        <end position="7"/>
    </location>
</feature>
<feature type="modified residue" description="Leucine amide" evidence="1">
    <location>
        <position position="7"/>
    </location>
</feature>
<reference key="1">
    <citation type="journal article" date="1997" name="Eur. J. Biochem.">
        <title>Isolation and identification of multiple neuropeptides of the allatostatin superfamily in the shore crab Carcinus maenas.</title>
        <authorList>
            <person name="Duve H."/>
            <person name="Johnsen A.H."/>
            <person name="Maestro J.-L."/>
            <person name="Scott A.G."/>
            <person name="Jaros P.P."/>
            <person name="Thorpe A."/>
        </authorList>
    </citation>
    <scope>PROTEIN SEQUENCE</scope>
    <scope>AMIDATION AT LEU-7</scope>
    <source>
        <tissue>Cerebral ganglion</tissue>
        <tissue>Thoracic ganglion</tissue>
    </source>
</reference>
<accession>P81807</accession>
<sequence length="7" mass="782">DPYAFGL</sequence>
<name>ALL4_CARMA</name>
<keyword id="KW-0027">Amidation</keyword>
<keyword id="KW-0903">Direct protein sequencing</keyword>
<keyword id="KW-0527">Neuropeptide</keyword>
<keyword id="KW-0964">Secreted</keyword>
<protein>
    <recommendedName>
        <fullName>Carcinustatin-4</fullName>
    </recommendedName>
</protein>
<proteinExistence type="evidence at protein level"/>
<organism>
    <name type="scientific">Carcinus maenas</name>
    <name type="common">Common shore crab</name>
    <name type="synonym">Green crab</name>
    <dbReference type="NCBI Taxonomy" id="6759"/>
    <lineage>
        <taxon>Eukaryota</taxon>
        <taxon>Metazoa</taxon>
        <taxon>Ecdysozoa</taxon>
        <taxon>Arthropoda</taxon>
        <taxon>Crustacea</taxon>
        <taxon>Multicrustacea</taxon>
        <taxon>Malacostraca</taxon>
        <taxon>Eumalacostraca</taxon>
        <taxon>Eucarida</taxon>
        <taxon>Decapoda</taxon>
        <taxon>Pleocyemata</taxon>
        <taxon>Brachyura</taxon>
        <taxon>Eubrachyura</taxon>
        <taxon>Portunoidea</taxon>
        <taxon>Carcinidae</taxon>
        <taxon>Carcinus</taxon>
    </lineage>
</organism>
<comment type="function">
    <text>May act as a neurotransmitter or neuromodulator.</text>
</comment>
<comment type="subcellular location">
    <subcellularLocation>
        <location>Secreted</location>
    </subcellularLocation>
</comment>
<comment type="similarity">
    <text evidence="2">Belongs to the allatostatin family.</text>
</comment>
<evidence type="ECO:0000269" key="1">
    <source>
    </source>
</evidence>
<evidence type="ECO:0000305" key="2"/>